<reference key="1">
    <citation type="journal article" date="2006" name="J. Bacteriol.">
        <title>Complete genome sequence of Yersinia pestis strains Antiqua and Nepal516: evidence of gene reduction in an emerging pathogen.</title>
        <authorList>
            <person name="Chain P.S.G."/>
            <person name="Hu P."/>
            <person name="Malfatti S.A."/>
            <person name="Radnedge L."/>
            <person name="Larimer F."/>
            <person name="Vergez L.M."/>
            <person name="Worsham P."/>
            <person name="Chu M.C."/>
            <person name="Andersen G.L."/>
        </authorList>
    </citation>
    <scope>NUCLEOTIDE SEQUENCE [LARGE SCALE GENOMIC DNA]</scope>
    <source>
        <strain>Antiqua</strain>
    </source>
</reference>
<accession>Q1CA61</accession>
<name>Y693_YERPA</name>
<protein>
    <recommendedName>
        <fullName evidence="1">UPF0434 protein YPA_0693</fullName>
    </recommendedName>
</protein>
<comment type="similarity">
    <text evidence="1">Belongs to the UPF0434 family.</text>
</comment>
<gene>
    <name type="ordered locus">YPA_0693</name>
</gene>
<dbReference type="EMBL" id="CP000308">
    <property type="protein sequence ID" value="ABG12661.1"/>
    <property type="molecule type" value="Genomic_DNA"/>
</dbReference>
<dbReference type="RefSeq" id="WP_002211315.1">
    <property type="nucleotide sequence ID" value="NZ_CP009906.1"/>
</dbReference>
<dbReference type="SMR" id="Q1CA61"/>
<dbReference type="KEGG" id="ypa:YPA_0693"/>
<dbReference type="Proteomes" id="UP000001971">
    <property type="component" value="Chromosome"/>
</dbReference>
<dbReference type="GO" id="GO:0005829">
    <property type="term" value="C:cytosol"/>
    <property type="evidence" value="ECO:0007669"/>
    <property type="project" value="TreeGrafter"/>
</dbReference>
<dbReference type="FunFam" id="2.20.25.10:FF:000002">
    <property type="entry name" value="UPF0434 protein YcaR"/>
    <property type="match status" value="1"/>
</dbReference>
<dbReference type="Gene3D" id="2.20.25.10">
    <property type="match status" value="1"/>
</dbReference>
<dbReference type="HAMAP" id="MF_01187">
    <property type="entry name" value="UPF0434"/>
    <property type="match status" value="1"/>
</dbReference>
<dbReference type="InterPro" id="IPR005651">
    <property type="entry name" value="Trm112-like"/>
</dbReference>
<dbReference type="PANTHER" id="PTHR33505:SF4">
    <property type="entry name" value="PROTEIN PREY, MITOCHONDRIAL"/>
    <property type="match status" value="1"/>
</dbReference>
<dbReference type="PANTHER" id="PTHR33505">
    <property type="entry name" value="ZGC:162634"/>
    <property type="match status" value="1"/>
</dbReference>
<dbReference type="Pfam" id="PF03966">
    <property type="entry name" value="Trm112p"/>
    <property type="match status" value="1"/>
</dbReference>
<dbReference type="SUPFAM" id="SSF158997">
    <property type="entry name" value="Trm112p-like"/>
    <property type="match status" value="1"/>
</dbReference>
<feature type="chain" id="PRO_0000291187" description="UPF0434 protein YPA_0693">
    <location>
        <begin position="1"/>
        <end position="60"/>
    </location>
</feature>
<sequence>MDHRLLEIVACPVCNGKLYFNKENLELVCKVDNLAYPVRDGIPVLLENEARPLSIDEKHA</sequence>
<evidence type="ECO:0000255" key="1">
    <source>
        <dbReference type="HAMAP-Rule" id="MF_01187"/>
    </source>
</evidence>
<organism>
    <name type="scientific">Yersinia pestis bv. Antiqua (strain Antiqua)</name>
    <dbReference type="NCBI Taxonomy" id="360102"/>
    <lineage>
        <taxon>Bacteria</taxon>
        <taxon>Pseudomonadati</taxon>
        <taxon>Pseudomonadota</taxon>
        <taxon>Gammaproteobacteria</taxon>
        <taxon>Enterobacterales</taxon>
        <taxon>Yersiniaceae</taxon>
        <taxon>Yersinia</taxon>
    </lineage>
</organism>
<proteinExistence type="inferred from homology"/>